<evidence type="ECO:0000250" key="1">
    <source>
        <dbReference type="UniProtKB" id="Q15154"/>
    </source>
</evidence>
<evidence type="ECO:0000250" key="2">
    <source>
        <dbReference type="UniProtKB" id="Q8AV28"/>
    </source>
</evidence>
<evidence type="ECO:0000250" key="3">
    <source>
        <dbReference type="UniProtKB" id="Q9R0L6"/>
    </source>
</evidence>
<evidence type="ECO:0000255" key="4"/>
<evidence type="ECO:0000256" key="5">
    <source>
        <dbReference type="SAM" id="MobiDB-lite"/>
    </source>
</evidence>
<evidence type="ECO:0000269" key="6">
    <source>
    </source>
</evidence>
<evidence type="ECO:0000305" key="7"/>
<dbReference type="EMBL" id="AB025414">
    <property type="protein sequence ID" value="BAA87862.1"/>
    <property type="molecule type" value="mRNA"/>
</dbReference>
<dbReference type="EMBL" id="BC081112">
    <property type="protein sequence ID" value="AAH81112.1"/>
    <property type="molecule type" value="mRNA"/>
</dbReference>
<dbReference type="RefSeq" id="NP_001081369.1">
    <property type="nucleotide sequence ID" value="NM_001087900.2"/>
</dbReference>
<dbReference type="SMR" id="Q9PVV4"/>
<dbReference type="BioGRID" id="99137">
    <property type="interactions" value="2"/>
</dbReference>
<dbReference type="IntAct" id="Q9PVV4">
    <property type="interactions" value="1"/>
</dbReference>
<dbReference type="GeneID" id="397798"/>
<dbReference type="KEGG" id="xla:397798"/>
<dbReference type="AGR" id="Xenbase:XB-GENE-958594"/>
<dbReference type="CTD" id="397798"/>
<dbReference type="Xenbase" id="XB-GENE-958594">
    <property type="gene designation" value="pcm1.L"/>
</dbReference>
<dbReference type="OrthoDB" id="2125770at2759"/>
<dbReference type="Proteomes" id="UP000186698">
    <property type="component" value="Chromosome 1L"/>
</dbReference>
<dbReference type="Bgee" id="397798">
    <property type="expression patterns" value="Expressed in egg cell and 19 other cell types or tissues"/>
</dbReference>
<dbReference type="GO" id="GO:0034451">
    <property type="term" value="C:centriolar satellite"/>
    <property type="evidence" value="ECO:0000314"/>
    <property type="project" value="BHF-UCL"/>
</dbReference>
<dbReference type="GO" id="GO:0005813">
    <property type="term" value="C:centrosome"/>
    <property type="evidence" value="ECO:0000250"/>
    <property type="project" value="UniProtKB"/>
</dbReference>
<dbReference type="GO" id="GO:0036064">
    <property type="term" value="C:ciliary basal body"/>
    <property type="evidence" value="ECO:0000318"/>
    <property type="project" value="GO_Central"/>
</dbReference>
<dbReference type="GO" id="GO:0005737">
    <property type="term" value="C:cytoplasm"/>
    <property type="evidence" value="ECO:0000314"/>
    <property type="project" value="BHF-UCL"/>
</dbReference>
<dbReference type="GO" id="GO:0042802">
    <property type="term" value="F:identical protein binding"/>
    <property type="evidence" value="ECO:0000353"/>
    <property type="project" value="BHF-UCL"/>
</dbReference>
<dbReference type="GO" id="GO:0060271">
    <property type="term" value="P:cilium assembly"/>
    <property type="evidence" value="ECO:0000250"/>
    <property type="project" value="UniProtKB"/>
</dbReference>
<dbReference type="GO" id="GO:0035735">
    <property type="term" value="P:intraciliary transport involved in cilium assembly"/>
    <property type="evidence" value="ECO:0000250"/>
    <property type="project" value="UniProtKB"/>
</dbReference>
<dbReference type="GO" id="GO:0034454">
    <property type="term" value="P:microtubule anchoring at centrosome"/>
    <property type="evidence" value="ECO:0000318"/>
    <property type="project" value="GO_Central"/>
</dbReference>
<dbReference type="GO" id="GO:1905515">
    <property type="term" value="P:non-motile cilium assembly"/>
    <property type="evidence" value="ECO:0000318"/>
    <property type="project" value="GO_Central"/>
</dbReference>
<dbReference type="GO" id="GO:0090316">
    <property type="term" value="P:positive regulation of intracellular protein transport"/>
    <property type="evidence" value="ECO:0000250"/>
    <property type="project" value="UniProtKB"/>
</dbReference>
<dbReference type="GO" id="GO:0071539">
    <property type="term" value="P:protein localization to centrosome"/>
    <property type="evidence" value="ECO:0000318"/>
    <property type="project" value="GO_Central"/>
</dbReference>
<dbReference type="InterPro" id="IPR031446">
    <property type="entry name" value="PCM1_C"/>
</dbReference>
<dbReference type="InterPro" id="IPR024138">
    <property type="entry name" value="Pericentriolar_Pcm1"/>
</dbReference>
<dbReference type="PANTHER" id="PTHR14164:SF12">
    <property type="entry name" value="PERICENTRIOLAR MATERIAL 1 PROTEIN"/>
    <property type="match status" value="1"/>
</dbReference>
<dbReference type="PANTHER" id="PTHR14164">
    <property type="entry name" value="PERICENTRIOLAR MATERIAL 1-RELATED"/>
    <property type="match status" value="1"/>
</dbReference>
<dbReference type="Pfam" id="PF15717">
    <property type="entry name" value="PCM1_C"/>
    <property type="match status" value="1"/>
</dbReference>
<reference key="1">
    <citation type="journal article" date="1999" name="J. Cell Biol.">
        <title>Centriolar satellites: molecular characterization, ATP-dependent movement toward centrioles and possible involvement in ciliogenesis.</title>
        <authorList>
            <person name="Kubo A."/>
            <person name="Sasaki H."/>
            <person name="Yuba-Kubo A."/>
            <person name="Tsukita S."/>
            <person name="Shiina N."/>
        </authorList>
    </citation>
    <scope>NUCLEOTIDE SEQUENCE [MRNA]</scope>
    <scope>SUBCELLULAR LOCATION</scope>
</reference>
<reference key="2">
    <citation type="journal article" date="1999" name="J. Cell Biol.">
        <authorList>
            <person name="Kubo A."/>
            <person name="Sasaki H."/>
            <person name="Yuba-Kubo A."/>
            <person name="Tsukita S."/>
            <person name="Shiina N."/>
        </authorList>
    </citation>
    <scope>ERRATUM OF PUBMED:10579718</scope>
</reference>
<reference key="3">
    <citation type="submission" date="2004-08" db="EMBL/GenBank/DDBJ databases">
        <authorList>
            <consortium name="NIH - Xenopus Gene Collection (XGC) project"/>
        </authorList>
    </citation>
    <scope>NUCLEOTIDE SEQUENCE [LARGE SCALE MRNA] OF 1-1336</scope>
    <source>
        <tissue>Oocyte</tissue>
    </source>
</reference>
<reference key="4">
    <citation type="journal article" date="2002" name="J. Cell Biol.">
        <title>Assembly of centrosomal proteins and microtubule organization depends on PCM-1.</title>
        <authorList>
            <person name="Dammermann A."/>
            <person name="Merdes A."/>
        </authorList>
    </citation>
    <scope>FUNCTION</scope>
    <scope>INTERACTION WITH CETN3</scope>
</reference>
<reference key="5">
    <citation type="journal article" date="2003" name="J. Cell Sci.">
        <title>Non-membranous granular organelle consisting of PCM-1: subcellular distribution and cell-cycle-dependent assembly/disassembly.</title>
        <authorList>
            <person name="Kubo A."/>
            <person name="Tsukita S."/>
        </authorList>
    </citation>
    <scope>SELF-ASSOCIATION</scope>
    <scope>SUBCELLULAR LOCATION</scope>
</reference>
<protein>
    <recommendedName>
        <fullName>Pericentriolar material 1 protein</fullName>
        <shortName>PCM-1</shortName>
        <shortName>xPCM-1</shortName>
    </recommendedName>
</protein>
<keyword id="KW-0966">Cell projection</keyword>
<keyword id="KW-0970">Cilium biogenesis/degradation</keyword>
<keyword id="KW-0175">Coiled coil</keyword>
<keyword id="KW-0963">Cytoplasm</keyword>
<keyword id="KW-0206">Cytoskeleton</keyword>
<keyword id="KW-1185">Reference proteome</keyword>
<comment type="function">
    <text evidence="1 3 6">Required to anchor microtubules to the centrosome (By similarity). Required for centrosome assembly and function. Essential for the correct localization of several centrosomal proteins including cetn3 and pcnt (PubMed:12403812). Probably involved in the biogenesis of cilia (By similarity).</text>
</comment>
<comment type="subunit">
    <text evidence="6">Self-associates. Interacts with cetn3.</text>
</comment>
<comment type="subcellular location">
    <subcellularLocation>
        <location evidence="2">Cytoplasm</location>
        <location evidence="2">Cytoskeleton</location>
    </subcellularLocation>
    <subcellularLocation>
        <location evidence="1">Cytoplasm</location>
        <location evidence="1">Cytoskeleton</location>
        <location evidence="1">Microtubule organizing center</location>
        <location evidence="1">Centrosome</location>
    </subcellularLocation>
    <subcellularLocation>
        <location evidence="1">Cytoplasmic granule</location>
    </subcellularLocation>
    <subcellularLocation>
        <location evidence="1">Cytoplasm</location>
        <location evidence="1">Cytoskeleton</location>
        <location evidence="1">Microtubule organizing center</location>
        <location evidence="1">Centrosome</location>
        <location evidence="1">Centriolar satellite</location>
    </subcellularLocation>
    <subcellularLocation>
        <location evidence="1">Cytoplasm</location>
        <location evidence="1">Cytoskeleton</location>
        <location evidence="1">Cilium basal body</location>
    </subcellularLocation>
    <text>Recruitment to the centrosome may require cytoplasmic dynein. The majority of the protein dissociates from the centrosome during metaphase. Also associates with microtubules.</text>
</comment>
<comment type="similarity">
    <text evidence="7">Belongs to the PCM1 family.</text>
</comment>
<accession>Q9PVV4</accession>
<accession>Q66J12</accession>
<organism>
    <name type="scientific">Xenopus laevis</name>
    <name type="common">African clawed frog</name>
    <dbReference type="NCBI Taxonomy" id="8355"/>
    <lineage>
        <taxon>Eukaryota</taxon>
        <taxon>Metazoa</taxon>
        <taxon>Chordata</taxon>
        <taxon>Craniata</taxon>
        <taxon>Vertebrata</taxon>
        <taxon>Euteleostomi</taxon>
        <taxon>Amphibia</taxon>
        <taxon>Batrachia</taxon>
        <taxon>Anura</taxon>
        <taxon>Pipoidea</taxon>
        <taxon>Pipidae</taxon>
        <taxon>Xenopodinae</taxon>
        <taxon>Xenopus</taxon>
        <taxon>Xenopus</taxon>
    </lineage>
</organism>
<proteinExistence type="evidence at protein level"/>
<sequence length="2031" mass="227868">MATGGGPPDEALSDQDLPNWSHESLDDRLNNMHWNGQKKGNRSAEKNKKKFVECDLRLTNDISPESSPGVGRRRARTPHTFPHTRYVSQMSVPEQAELEKLKQKINFSDLDQRSIGSDSQGRATAANNKRQLADNRKPFNFLPSQLNTNKEKSKSPPKREASTRSLTKDFLASALNKDFLSNSQAFLEEESKREPAIDSSQVVSRLVQIRDYITKASSLRDDLVQKKDLSVNVERLSNLIEHLKFQEKSYLKFLQKMLASENEEEDVRTVDSAVGSGSVVESTLLTFDVPSEASDTTGVDPRQEAKEELKNMKKQHALLTRMLQQQEQLRTLKGRQAALLALQHKAEQAIAKMDESVVTETTGSVSGLSLTSELNEELNDLIQRFHNQLHDSEDPPAPDNRRQAESLSLAREVYRSRNSSTSDTPLEDKSPLFNNVGVLLEKKQKMDTLLGELHTLQDQQLNNTAFVASSVSPRRSTEQRTLGSAVSSALTSDNRAARSPVTIGAYQTASVNESEDEENQNPAEKLKKLKEVRKRLNELRELVHYYEQTSDMMTDAMNENTKDEDETEDSEYDSEQEDAEPTTNIRNPQYRSSWAQMNINSNNQSGTNNRDERQLNTECEINNRSAVNLRSFNMPSALDCLYNIEHSDKEEDGNRELDDEDAEDQGSRASLSSQNSVADDVQSVDFEQKFNRLVAAKQKLKQLQDLVAMYGDDSESEPVAPERSFSGDQFPPEATTLKQQPNNTRPNVSKAQKDIALKEQAREKFYESKLQQQQRELSQLQEERKKLIEIQEKIQTLRKACPDLQLSTSSAGTNPANRQNRQMTTTTSTPDVNTNGNIVVPAMPDPEDSSSVDNEVWSEIRKHQILREDLRQRRKQLETLMAEHQRRQGNTETTSAASIRSDDSDTQGLQQQTRTEKTMATWGGSTQCALEEEEEEEEVDDEECLSDVHQIDIEEDEQDNTSCENNSYPQNSIRKTSFNGRSSKDGWKNQCPLSVEGNHRPSPKTRQQQNVSMRRQENYRWMSELSHVEEKEHWQEQIDQIKKQLDYSTSICQTLMRDQQALSYLLQSMITTPYSVMPSNVGASQVQLIMHQLNQCYTQLNWQQSNVLRLKQMLNDLLVQQPQHLQGESHQREDRGSSAPPLTSPNIFPNFSFLPPTMNLLNMPAFGSIPNVVPGMNFNPVFPHGFENFTQNVASHTDTPLQPHDQNTSGKTEYMAFPKPFESHRSNSTEKERNPPKKPDESEQGRRVWVENHQKSDQEKKPACFGAGLSAGGASAKLAEESRKVKQFDEVSVESLSSMPDPVDPTTVTKMFKSRKASAQASLASKDKTPKAKNKKRKVFHQKSKGIKSCGFQAASASSASEPNQTTCKHAQTEEVVVGNVIKTSSAQRVEKESKATEMSSEAGSDVSMFETLRDTIYSEVATLISQNESRPHFLIELFHELQLLNTDYLRQKALFALQDIVTRHVSEGNAKKHETCTKALESTGWMASTSELTPSESLVTTDDEMYAKNSDGPVCQEGEQNDGDNISSLSTSSNFEPFATDDLGNTVIHFDQALARMREYERMKSETENGLVADCCNNLNAAASSLEGTNDEARGRAQHSVDDASGIPCPYIDSKQLDRQIKAIMKEVIPFLKEHMEEVCSPNLLTSIRRLVLTLTQQNDESKEFVKFFHKQLGSILQDSLAKFSSKKLKDCGEDLLVEISEVLFNELAFFRLMQDLDNNSTAVQGTVSRKPEAVVVLESFTKEADKEEKTCPEENFSATRETDDEDKDKDETETAEENRNFDAEVLSGKSDISEEDDLDESLPVSISFTKAETQALTNYGSGEDENEDEENYEFEARPVDVQTSLETSSEIADETEKEEMEVRPEANIENEKALSLAVNVMGELSIHEDQAKSDCDVLAHPSLLLSNEKATDFSGTALVNNVKSPVDSPGTSGAGSSDTESPVLVNDFETGSGNLSQKSDEDDFVKVEDLPLKLSLPQEQIMKDIEEEENKNNLCDEILNINDEENGADQLAGDPLALKEPDSPAIHPA</sequence>
<feature type="chain" id="PRO_0000274040" description="Pericentriolar material 1 protein">
    <location>
        <begin position="1"/>
        <end position="2031"/>
    </location>
</feature>
<feature type="region of interest" description="Self-association">
    <location>
        <begin position="1"/>
        <end position="484"/>
    </location>
</feature>
<feature type="region of interest" description="Disordered" evidence="5">
    <location>
        <begin position="1"/>
        <end position="82"/>
    </location>
</feature>
<feature type="region of interest" description="Disordered" evidence="5">
    <location>
        <begin position="111"/>
        <end position="165"/>
    </location>
</feature>
<feature type="region of interest" description="Disordered" evidence="5">
    <location>
        <begin position="469"/>
        <end position="495"/>
    </location>
</feature>
<feature type="region of interest" description="Disordered" evidence="5">
    <location>
        <begin position="550"/>
        <end position="590"/>
    </location>
</feature>
<feature type="region of interest" description="Disordered" evidence="5">
    <location>
        <begin position="649"/>
        <end position="678"/>
    </location>
</feature>
<feature type="region of interest" description="Disordered" evidence="5">
    <location>
        <begin position="712"/>
        <end position="752"/>
    </location>
</feature>
<feature type="region of interest" description="Self-association and localization to centrosomes">
    <location>
        <begin position="745"/>
        <end position="1271"/>
    </location>
</feature>
<feature type="region of interest" description="Disordered" evidence="5">
    <location>
        <begin position="806"/>
        <end position="835"/>
    </location>
</feature>
<feature type="region of interest" description="Disordered" evidence="5">
    <location>
        <begin position="882"/>
        <end position="1014"/>
    </location>
</feature>
<feature type="region of interest" description="Disordered" evidence="5">
    <location>
        <begin position="1123"/>
        <end position="1146"/>
    </location>
</feature>
<feature type="region of interest" description="Disordered" evidence="5">
    <location>
        <begin position="1219"/>
        <end position="1247"/>
    </location>
</feature>
<feature type="region of interest" description="Disordered" evidence="5">
    <location>
        <begin position="1318"/>
        <end position="1345"/>
    </location>
</feature>
<feature type="region of interest" description="Disordered" evidence="5">
    <location>
        <begin position="1514"/>
        <end position="1533"/>
    </location>
</feature>
<feature type="region of interest" description="Disordered" evidence="5">
    <location>
        <begin position="1746"/>
        <end position="1802"/>
    </location>
</feature>
<feature type="region of interest" description="Disordered" evidence="5">
    <location>
        <begin position="1817"/>
        <end position="1870"/>
    </location>
</feature>
<feature type="region of interest" description="Disordered" evidence="5">
    <location>
        <begin position="1922"/>
        <end position="1965"/>
    </location>
</feature>
<feature type="region of interest" description="Disordered" evidence="5">
    <location>
        <begin position="2007"/>
        <end position="2031"/>
    </location>
</feature>
<feature type="coiled-coil region" evidence="4">
    <location>
        <begin position="302"/>
        <end position="394"/>
    </location>
</feature>
<feature type="coiled-coil region" evidence="4">
    <location>
        <begin position="523"/>
        <end position="549"/>
    </location>
</feature>
<feature type="coiled-coil region" evidence="4">
    <location>
        <begin position="684"/>
        <end position="711"/>
    </location>
</feature>
<feature type="coiled-coil region" evidence="4">
    <location>
        <begin position="757"/>
        <end position="805"/>
    </location>
</feature>
<feature type="coiled-coil region" evidence="4">
    <location>
        <begin position="858"/>
        <end position="892"/>
    </location>
</feature>
<feature type="coiled-coil region" evidence="4">
    <location>
        <begin position="1025"/>
        <end position="1049"/>
    </location>
</feature>
<feature type="coiled-coil region" evidence="4">
    <location>
        <begin position="1550"/>
        <end position="1599"/>
    </location>
</feature>
<feature type="compositionally biased region" description="Basic and acidic residues" evidence="5">
    <location>
        <begin position="42"/>
        <end position="58"/>
    </location>
</feature>
<feature type="compositionally biased region" description="Polar residues" evidence="5">
    <location>
        <begin position="114"/>
        <end position="130"/>
    </location>
</feature>
<feature type="compositionally biased region" description="Basic and acidic residues" evidence="5">
    <location>
        <begin position="149"/>
        <end position="162"/>
    </location>
</feature>
<feature type="compositionally biased region" description="Polar residues" evidence="5">
    <location>
        <begin position="469"/>
        <end position="494"/>
    </location>
</feature>
<feature type="compositionally biased region" description="Acidic residues" evidence="5">
    <location>
        <begin position="562"/>
        <end position="580"/>
    </location>
</feature>
<feature type="compositionally biased region" description="Polar residues" evidence="5">
    <location>
        <begin position="581"/>
        <end position="590"/>
    </location>
</feature>
<feature type="compositionally biased region" description="Polar residues" evidence="5">
    <location>
        <begin position="667"/>
        <end position="677"/>
    </location>
</feature>
<feature type="compositionally biased region" description="Polar residues" evidence="5">
    <location>
        <begin position="736"/>
        <end position="750"/>
    </location>
</feature>
<feature type="compositionally biased region" description="Polar residues" evidence="5">
    <location>
        <begin position="806"/>
        <end position="823"/>
    </location>
</feature>
<feature type="compositionally biased region" description="Polar residues" evidence="5">
    <location>
        <begin position="888"/>
        <end position="898"/>
    </location>
</feature>
<feature type="compositionally biased region" description="Acidic residues" evidence="5">
    <location>
        <begin position="930"/>
        <end position="945"/>
    </location>
</feature>
<feature type="compositionally biased region" description="Polar residues" evidence="5">
    <location>
        <begin position="960"/>
        <end position="981"/>
    </location>
</feature>
<feature type="compositionally biased region" description="Polar residues" evidence="5">
    <location>
        <begin position="1004"/>
        <end position="1013"/>
    </location>
</feature>
<feature type="compositionally biased region" description="Basic and acidic residues" evidence="5">
    <location>
        <begin position="1127"/>
        <end position="1136"/>
    </location>
</feature>
<feature type="compositionally biased region" description="Basic and acidic residues" evidence="5">
    <location>
        <begin position="1221"/>
        <end position="1247"/>
    </location>
</feature>
<feature type="compositionally biased region" description="Basic residues" evidence="5">
    <location>
        <begin position="1331"/>
        <end position="1345"/>
    </location>
</feature>
<feature type="compositionally biased region" description="Polar residues" evidence="5">
    <location>
        <begin position="1524"/>
        <end position="1533"/>
    </location>
</feature>
<feature type="compositionally biased region" description="Basic and acidic residues" evidence="5">
    <location>
        <begin position="1771"/>
        <end position="1784"/>
    </location>
</feature>
<feature type="compositionally biased region" description="Acidic residues" evidence="5">
    <location>
        <begin position="1824"/>
        <end position="1835"/>
    </location>
</feature>
<feature type="compositionally biased region" description="Polar residues" evidence="5">
    <location>
        <begin position="1843"/>
        <end position="1852"/>
    </location>
</feature>
<feature type="compositionally biased region" description="Polar residues" evidence="5">
    <location>
        <begin position="1922"/>
        <end position="1942"/>
    </location>
</feature>
<feature type="sequence conflict" description="In Ref. 3; AAH81112." evidence="7" ref="3">
    <original>V</original>
    <variation>I</variation>
    <location>
        <position position="832"/>
    </location>
</feature>
<feature type="sequence conflict" description="In Ref. 3; AAH81112." evidence="7" ref="3">
    <original>N</original>
    <variation>K</variation>
    <location>
        <position position="1334"/>
    </location>
</feature>
<gene>
    <name type="primary">pcm1</name>
</gene>
<name>PCM1_XENLA</name>